<evidence type="ECO:0000255" key="1">
    <source>
        <dbReference type="HAMAP-Rule" id="MF_00252"/>
    </source>
</evidence>
<name>SYK_PHOPR</name>
<accession>Q6LUN2</accession>
<comment type="catalytic activity">
    <reaction evidence="1">
        <text>tRNA(Lys) + L-lysine + ATP = L-lysyl-tRNA(Lys) + AMP + diphosphate</text>
        <dbReference type="Rhea" id="RHEA:20792"/>
        <dbReference type="Rhea" id="RHEA-COMP:9696"/>
        <dbReference type="Rhea" id="RHEA-COMP:9697"/>
        <dbReference type="ChEBI" id="CHEBI:30616"/>
        <dbReference type="ChEBI" id="CHEBI:32551"/>
        <dbReference type="ChEBI" id="CHEBI:33019"/>
        <dbReference type="ChEBI" id="CHEBI:78442"/>
        <dbReference type="ChEBI" id="CHEBI:78529"/>
        <dbReference type="ChEBI" id="CHEBI:456215"/>
        <dbReference type="EC" id="6.1.1.6"/>
    </reaction>
</comment>
<comment type="cofactor">
    <cofactor evidence="1">
        <name>Mg(2+)</name>
        <dbReference type="ChEBI" id="CHEBI:18420"/>
    </cofactor>
    <text evidence="1">Binds 3 Mg(2+) ions per subunit.</text>
</comment>
<comment type="subunit">
    <text evidence="1">Homodimer.</text>
</comment>
<comment type="subcellular location">
    <subcellularLocation>
        <location evidence="1">Cytoplasm</location>
    </subcellularLocation>
</comment>
<comment type="similarity">
    <text evidence="1">Belongs to the class-II aminoacyl-tRNA synthetase family.</text>
</comment>
<dbReference type="EC" id="6.1.1.6" evidence="1"/>
<dbReference type="EMBL" id="CR378664">
    <property type="protein sequence ID" value="CAG18993.1"/>
    <property type="molecule type" value="Genomic_DNA"/>
</dbReference>
<dbReference type="RefSeq" id="WP_011217344.1">
    <property type="nucleotide sequence ID" value="NC_006370.1"/>
</dbReference>
<dbReference type="SMR" id="Q6LUN2"/>
<dbReference type="STRING" id="298386.PBPRA0570"/>
<dbReference type="KEGG" id="ppr:PBPRA0570"/>
<dbReference type="eggNOG" id="COG1190">
    <property type="taxonomic scope" value="Bacteria"/>
</dbReference>
<dbReference type="HOGENOM" id="CLU_008255_6_0_6"/>
<dbReference type="Proteomes" id="UP000000593">
    <property type="component" value="Chromosome 1"/>
</dbReference>
<dbReference type="GO" id="GO:0005829">
    <property type="term" value="C:cytosol"/>
    <property type="evidence" value="ECO:0007669"/>
    <property type="project" value="TreeGrafter"/>
</dbReference>
<dbReference type="GO" id="GO:0005524">
    <property type="term" value="F:ATP binding"/>
    <property type="evidence" value="ECO:0007669"/>
    <property type="project" value="UniProtKB-UniRule"/>
</dbReference>
<dbReference type="GO" id="GO:0004824">
    <property type="term" value="F:lysine-tRNA ligase activity"/>
    <property type="evidence" value="ECO:0007669"/>
    <property type="project" value="UniProtKB-UniRule"/>
</dbReference>
<dbReference type="GO" id="GO:0000287">
    <property type="term" value="F:magnesium ion binding"/>
    <property type="evidence" value="ECO:0007669"/>
    <property type="project" value="UniProtKB-UniRule"/>
</dbReference>
<dbReference type="GO" id="GO:0000049">
    <property type="term" value="F:tRNA binding"/>
    <property type="evidence" value="ECO:0007669"/>
    <property type="project" value="TreeGrafter"/>
</dbReference>
<dbReference type="GO" id="GO:0006430">
    <property type="term" value="P:lysyl-tRNA aminoacylation"/>
    <property type="evidence" value="ECO:0007669"/>
    <property type="project" value="UniProtKB-UniRule"/>
</dbReference>
<dbReference type="CDD" id="cd00775">
    <property type="entry name" value="LysRS_core"/>
    <property type="match status" value="1"/>
</dbReference>
<dbReference type="CDD" id="cd04322">
    <property type="entry name" value="LysRS_N"/>
    <property type="match status" value="1"/>
</dbReference>
<dbReference type="FunFam" id="2.40.50.140:FF:000024">
    <property type="entry name" value="Lysine--tRNA ligase"/>
    <property type="match status" value="1"/>
</dbReference>
<dbReference type="FunFam" id="3.30.930.10:FF:000001">
    <property type="entry name" value="Lysine--tRNA ligase"/>
    <property type="match status" value="1"/>
</dbReference>
<dbReference type="Gene3D" id="3.30.930.10">
    <property type="entry name" value="Bira Bifunctional Protein, Domain 2"/>
    <property type="match status" value="1"/>
</dbReference>
<dbReference type="Gene3D" id="2.40.50.140">
    <property type="entry name" value="Nucleic acid-binding proteins"/>
    <property type="match status" value="1"/>
</dbReference>
<dbReference type="HAMAP" id="MF_00252">
    <property type="entry name" value="Lys_tRNA_synth_class2"/>
    <property type="match status" value="1"/>
</dbReference>
<dbReference type="InterPro" id="IPR004364">
    <property type="entry name" value="Aa-tRNA-synt_II"/>
</dbReference>
<dbReference type="InterPro" id="IPR006195">
    <property type="entry name" value="aa-tRNA-synth_II"/>
</dbReference>
<dbReference type="InterPro" id="IPR045864">
    <property type="entry name" value="aa-tRNA-synth_II/BPL/LPL"/>
</dbReference>
<dbReference type="InterPro" id="IPR002313">
    <property type="entry name" value="Lys-tRNA-ligase_II"/>
</dbReference>
<dbReference type="InterPro" id="IPR044136">
    <property type="entry name" value="Lys-tRNA-ligase_II_N"/>
</dbReference>
<dbReference type="InterPro" id="IPR018149">
    <property type="entry name" value="Lys-tRNA-synth_II_C"/>
</dbReference>
<dbReference type="InterPro" id="IPR012340">
    <property type="entry name" value="NA-bd_OB-fold"/>
</dbReference>
<dbReference type="InterPro" id="IPR004365">
    <property type="entry name" value="NA-bd_OB_tRNA"/>
</dbReference>
<dbReference type="NCBIfam" id="TIGR00499">
    <property type="entry name" value="lysS_bact"/>
    <property type="match status" value="1"/>
</dbReference>
<dbReference type="NCBIfam" id="NF001756">
    <property type="entry name" value="PRK00484.1"/>
    <property type="match status" value="1"/>
</dbReference>
<dbReference type="PANTHER" id="PTHR42918:SF15">
    <property type="entry name" value="LYSINE--TRNA LIGASE, CHLOROPLASTIC_MITOCHONDRIAL"/>
    <property type="match status" value="1"/>
</dbReference>
<dbReference type="PANTHER" id="PTHR42918">
    <property type="entry name" value="LYSYL-TRNA SYNTHETASE"/>
    <property type="match status" value="1"/>
</dbReference>
<dbReference type="Pfam" id="PF00152">
    <property type="entry name" value="tRNA-synt_2"/>
    <property type="match status" value="1"/>
</dbReference>
<dbReference type="Pfam" id="PF01336">
    <property type="entry name" value="tRNA_anti-codon"/>
    <property type="match status" value="1"/>
</dbReference>
<dbReference type="PRINTS" id="PR00982">
    <property type="entry name" value="TRNASYNTHLYS"/>
</dbReference>
<dbReference type="SUPFAM" id="SSF55681">
    <property type="entry name" value="Class II aaRS and biotin synthetases"/>
    <property type="match status" value="1"/>
</dbReference>
<dbReference type="SUPFAM" id="SSF50249">
    <property type="entry name" value="Nucleic acid-binding proteins"/>
    <property type="match status" value="1"/>
</dbReference>
<dbReference type="PROSITE" id="PS50862">
    <property type="entry name" value="AA_TRNA_LIGASE_II"/>
    <property type="match status" value="1"/>
</dbReference>
<organism>
    <name type="scientific">Photobacterium profundum (strain SS9)</name>
    <dbReference type="NCBI Taxonomy" id="298386"/>
    <lineage>
        <taxon>Bacteria</taxon>
        <taxon>Pseudomonadati</taxon>
        <taxon>Pseudomonadota</taxon>
        <taxon>Gammaproteobacteria</taxon>
        <taxon>Vibrionales</taxon>
        <taxon>Vibrionaceae</taxon>
        <taxon>Photobacterium</taxon>
    </lineage>
</organism>
<sequence>MTDQVQDENKLIAERRAKLDMIRKNCKANGHPNDFRRDSLAADLQATFGEKTKPELEEEGHIVAIAGRVMAKRGPFLAIQDVSGRIQAYADKTVQKELKEKYSGLDIGDIIGVKGQLHLSGKGDLYVTMDNYELLTKALRPLPEKFHGLTDQETRYRQRYVDLIVNEDSRNTMIMRSKVVSAIRNFMMKKDFMEVETPMMHVIPGGATARPFITHHNALDIDMYLRVAPELYLKRLVVGGFERVFEINRNFRNEGLSPRHNPEFTMMEFYMAYADYNDLMDLTEEMLSSIATDLHGSPKLPYGDAIVDFGGPYPRISMLNAIKQYNPDNAEIQALTYEQVADRELMANIARGLDIYVEKFWTCGQLLEEIFGETAEPQLMQPTFITEYPADISPLARRNDTNDFITDRFEFFIGGREVANGFSELNDAQDQDQRFKAQVNAKDAGDDEAMYYDADYITALEHGLPPTAGQGIGIDRLVMLFTNTHTIRDVILFPALRPQNKA</sequence>
<protein>
    <recommendedName>
        <fullName evidence="1">Lysine--tRNA ligase</fullName>
        <ecNumber evidence="1">6.1.1.6</ecNumber>
    </recommendedName>
    <alternativeName>
        <fullName evidence="1">Lysyl-tRNA synthetase</fullName>
        <shortName evidence="1">LysRS</shortName>
    </alternativeName>
</protein>
<feature type="chain" id="PRO_1000012901" description="Lysine--tRNA ligase">
    <location>
        <begin position="1"/>
        <end position="502"/>
    </location>
</feature>
<feature type="binding site" evidence="1">
    <location>
        <position position="410"/>
    </location>
    <ligand>
        <name>Mg(2+)</name>
        <dbReference type="ChEBI" id="CHEBI:18420"/>
        <label>1</label>
    </ligand>
</feature>
<feature type="binding site" evidence="1">
    <location>
        <position position="417"/>
    </location>
    <ligand>
        <name>Mg(2+)</name>
        <dbReference type="ChEBI" id="CHEBI:18420"/>
        <label>1</label>
    </ligand>
</feature>
<feature type="binding site" evidence="1">
    <location>
        <position position="417"/>
    </location>
    <ligand>
        <name>Mg(2+)</name>
        <dbReference type="ChEBI" id="CHEBI:18420"/>
        <label>2</label>
    </ligand>
</feature>
<keyword id="KW-0030">Aminoacyl-tRNA synthetase</keyword>
<keyword id="KW-0067">ATP-binding</keyword>
<keyword id="KW-0963">Cytoplasm</keyword>
<keyword id="KW-0436">Ligase</keyword>
<keyword id="KW-0460">Magnesium</keyword>
<keyword id="KW-0479">Metal-binding</keyword>
<keyword id="KW-0547">Nucleotide-binding</keyword>
<keyword id="KW-0648">Protein biosynthesis</keyword>
<keyword id="KW-1185">Reference proteome</keyword>
<proteinExistence type="inferred from homology"/>
<gene>
    <name evidence="1" type="primary">lysS</name>
    <name type="ordered locus">PBPRA0570</name>
</gene>
<reference key="1">
    <citation type="journal article" date="2005" name="Science">
        <title>Life at depth: Photobacterium profundum genome sequence and expression analysis.</title>
        <authorList>
            <person name="Vezzi A."/>
            <person name="Campanaro S."/>
            <person name="D'Angelo M."/>
            <person name="Simonato F."/>
            <person name="Vitulo N."/>
            <person name="Lauro F.M."/>
            <person name="Cestaro A."/>
            <person name="Malacrida G."/>
            <person name="Simionati B."/>
            <person name="Cannata N."/>
            <person name="Romualdi C."/>
            <person name="Bartlett D.H."/>
            <person name="Valle G."/>
        </authorList>
    </citation>
    <scope>NUCLEOTIDE SEQUENCE [LARGE SCALE GENOMIC DNA]</scope>
    <source>
        <strain>ATCC BAA-1253 / SS9</strain>
    </source>
</reference>